<dbReference type="EC" id="6.1.1.4" evidence="1"/>
<dbReference type="EMBL" id="CP001283">
    <property type="protein sequence ID" value="ACK89591.1"/>
    <property type="molecule type" value="Genomic_DNA"/>
</dbReference>
<dbReference type="RefSeq" id="WP_000009448.1">
    <property type="nucleotide sequence ID" value="NC_011773.1"/>
</dbReference>
<dbReference type="SMR" id="B7JT07"/>
<dbReference type="GeneID" id="45024607"/>
<dbReference type="KEGG" id="bcu:BCAH820_4861"/>
<dbReference type="HOGENOM" id="CLU_004427_0_0_9"/>
<dbReference type="Proteomes" id="UP000001363">
    <property type="component" value="Chromosome"/>
</dbReference>
<dbReference type="GO" id="GO:0005829">
    <property type="term" value="C:cytosol"/>
    <property type="evidence" value="ECO:0007669"/>
    <property type="project" value="TreeGrafter"/>
</dbReference>
<dbReference type="GO" id="GO:0002161">
    <property type="term" value="F:aminoacyl-tRNA deacylase activity"/>
    <property type="evidence" value="ECO:0007669"/>
    <property type="project" value="InterPro"/>
</dbReference>
<dbReference type="GO" id="GO:0005524">
    <property type="term" value="F:ATP binding"/>
    <property type="evidence" value="ECO:0007669"/>
    <property type="project" value="UniProtKB-UniRule"/>
</dbReference>
<dbReference type="GO" id="GO:0004823">
    <property type="term" value="F:leucine-tRNA ligase activity"/>
    <property type="evidence" value="ECO:0007669"/>
    <property type="project" value="UniProtKB-UniRule"/>
</dbReference>
<dbReference type="GO" id="GO:0006429">
    <property type="term" value="P:leucyl-tRNA aminoacylation"/>
    <property type="evidence" value="ECO:0007669"/>
    <property type="project" value="UniProtKB-UniRule"/>
</dbReference>
<dbReference type="CDD" id="cd07958">
    <property type="entry name" value="Anticodon_Ia_Leu_BEm"/>
    <property type="match status" value="1"/>
</dbReference>
<dbReference type="CDD" id="cd00812">
    <property type="entry name" value="LeuRS_core"/>
    <property type="match status" value="1"/>
</dbReference>
<dbReference type="FunFam" id="1.10.730.10:FF:000012">
    <property type="entry name" value="Leucine--tRNA ligase"/>
    <property type="match status" value="1"/>
</dbReference>
<dbReference type="FunFam" id="1.10.730.10:FF:000018">
    <property type="entry name" value="Leucine--tRNA ligase"/>
    <property type="match status" value="1"/>
</dbReference>
<dbReference type="FunFam" id="3.10.20.590:FF:000001">
    <property type="entry name" value="Leucine--tRNA ligase"/>
    <property type="match status" value="1"/>
</dbReference>
<dbReference type="FunFam" id="3.40.50.620:FF:000056">
    <property type="entry name" value="Leucine--tRNA ligase"/>
    <property type="match status" value="1"/>
</dbReference>
<dbReference type="FunFam" id="3.40.50.620:FF:000077">
    <property type="entry name" value="Leucine--tRNA ligase"/>
    <property type="match status" value="1"/>
</dbReference>
<dbReference type="Gene3D" id="3.10.20.590">
    <property type="match status" value="1"/>
</dbReference>
<dbReference type="Gene3D" id="3.40.50.620">
    <property type="entry name" value="HUPs"/>
    <property type="match status" value="2"/>
</dbReference>
<dbReference type="Gene3D" id="1.10.730.10">
    <property type="entry name" value="Isoleucyl-tRNA Synthetase, Domain 1"/>
    <property type="match status" value="1"/>
</dbReference>
<dbReference type="HAMAP" id="MF_00049_B">
    <property type="entry name" value="Leu_tRNA_synth_B"/>
    <property type="match status" value="1"/>
</dbReference>
<dbReference type="InterPro" id="IPR001412">
    <property type="entry name" value="aa-tRNA-synth_I_CS"/>
</dbReference>
<dbReference type="InterPro" id="IPR002300">
    <property type="entry name" value="aa-tRNA-synth_Ia"/>
</dbReference>
<dbReference type="InterPro" id="IPR002302">
    <property type="entry name" value="Leu-tRNA-ligase"/>
</dbReference>
<dbReference type="InterPro" id="IPR025709">
    <property type="entry name" value="Leu_tRNA-synth_edit"/>
</dbReference>
<dbReference type="InterPro" id="IPR013155">
    <property type="entry name" value="M/V/L/I-tRNA-synth_anticd-bd"/>
</dbReference>
<dbReference type="InterPro" id="IPR015413">
    <property type="entry name" value="Methionyl/Leucyl_tRNA_Synth"/>
</dbReference>
<dbReference type="InterPro" id="IPR014729">
    <property type="entry name" value="Rossmann-like_a/b/a_fold"/>
</dbReference>
<dbReference type="InterPro" id="IPR009080">
    <property type="entry name" value="tRNAsynth_Ia_anticodon-bd"/>
</dbReference>
<dbReference type="InterPro" id="IPR009008">
    <property type="entry name" value="Val/Leu/Ile-tRNA-synth_edit"/>
</dbReference>
<dbReference type="NCBIfam" id="TIGR00396">
    <property type="entry name" value="leuS_bact"/>
    <property type="match status" value="1"/>
</dbReference>
<dbReference type="PANTHER" id="PTHR43740:SF2">
    <property type="entry name" value="LEUCINE--TRNA LIGASE, MITOCHONDRIAL"/>
    <property type="match status" value="1"/>
</dbReference>
<dbReference type="PANTHER" id="PTHR43740">
    <property type="entry name" value="LEUCYL-TRNA SYNTHETASE"/>
    <property type="match status" value="1"/>
</dbReference>
<dbReference type="Pfam" id="PF08264">
    <property type="entry name" value="Anticodon_1"/>
    <property type="match status" value="1"/>
</dbReference>
<dbReference type="Pfam" id="PF00133">
    <property type="entry name" value="tRNA-synt_1"/>
    <property type="match status" value="1"/>
</dbReference>
<dbReference type="Pfam" id="PF13603">
    <property type="entry name" value="tRNA-synt_1_2"/>
    <property type="match status" value="1"/>
</dbReference>
<dbReference type="Pfam" id="PF09334">
    <property type="entry name" value="tRNA-synt_1g"/>
    <property type="match status" value="1"/>
</dbReference>
<dbReference type="PRINTS" id="PR00985">
    <property type="entry name" value="TRNASYNTHLEU"/>
</dbReference>
<dbReference type="SUPFAM" id="SSF47323">
    <property type="entry name" value="Anticodon-binding domain of a subclass of class I aminoacyl-tRNA synthetases"/>
    <property type="match status" value="1"/>
</dbReference>
<dbReference type="SUPFAM" id="SSF52374">
    <property type="entry name" value="Nucleotidylyl transferase"/>
    <property type="match status" value="1"/>
</dbReference>
<dbReference type="SUPFAM" id="SSF50677">
    <property type="entry name" value="ValRS/IleRS/LeuRS editing domain"/>
    <property type="match status" value="1"/>
</dbReference>
<dbReference type="PROSITE" id="PS00178">
    <property type="entry name" value="AA_TRNA_LIGASE_I"/>
    <property type="match status" value="1"/>
</dbReference>
<proteinExistence type="inferred from homology"/>
<reference key="1">
    <citation type="submission" date="2008-10" db="EMBL/GenBank/DDBJ databases">
        <title>Genome sequence of Bacillus cereus AH820.</title>
        <authorList>
            <person name="Dodson R.J."/>
            <person name="Durkin A.S."/>
            <person name="Rosovitz M.J."/>
            <person name="Rasko D.A."/>
            <person name="Hoffmaster A."/>
            <person name="Ravel J."/>
            <person name="Sutton G."/>
        </authorList>
    </citation>
    <scope>NUCLEOTIDE SEQUENCE [LARGE SCALE GENOMIC DNA]</scope>
    <source>
        <strain>AH820</strain>
    </source>
</reference>
<name>SYL_BACC0</name>
<sequence>MSFNHQEIEKKWQGYWEENKTFRTPDETEKPKFYALDMFPYPSGAGLHVGHPEGYTATDILSRMKRMQGYNVLHPMGWDAFGLPAEQYALDTGNSPAEFTEHNINTFRNQIKSLGFSYDWDREVNTTDPNYYKWTQWIFLKLFEKGLAYVDEVPVNWCPALGTVLANEEIIDGKSERGGHPVERRPMRQWMLKITAYGDRLLEDLDELDWPESLKDMQRNWIGRSEGAEVHFNIDGTDEKFTVFTTRPDTLFGASYCVLAPEHALVADITTADQKEAVEAYINSVKMKSDLERTELAKEKTGVFTGAYAVNPVNGEKLPIWIADYVLATYGTGAVMAVPAHDERDYEFASTFNLPMKEVVKGGDITKEAYTGDGAHVNSAFLDGLNKEEAIAKMIEWLEVTSAGNQKVTYRLRDWLFSRQRYWGEPIPVIHWEDGTMTAVKEEELPLVLPKTENIRPSGTGESPLANIDEWVNVVDPETGKKGRRETNTMPQWAGSCWYYLRYIDPNNSEALVDPEKVKQWLPVDIYIGGAEHAVLHLLYARFWHKVLYDIGVVPTKEPFQQLFNQGMILGENNEKMSKSKGNVVNPDDIVASHGADTLRLYEMFMGPLDASIAWSENGLDGARRFLDRVWRLFVQDNGELSEKITDAPNKDLEKAYHQTVKKVTEDYAELRFNTAISQMMVFINDAYKAETLPKEYVEGFVKMIAPVAPHIGEELWSKLGYNETITYASWPTFDESKLVEDEVEIVVQVMGKVRAKLTMSKDASKDEMEKLALEAIQDQIEGKTVRKVIVVPGKLVNVVAN</sequence>
<keyword id="KW-0030">Aminoacyl-tRNA synthetase</keyword>
<keyword id="KW-0067">ATP-binding</keyword>
<keyword id="KW-0963">Cytoplasm</keyword>
<keyword id="KW-0436">Ligase</keyword>
<keyword id="KW-0547">Nucleotide-binding</keyword>
<keyword id="KW-0648">Protein biosynthesis</keyword>
<comment type="catalytic activity">
    <reaction evidence="1">
        <text>tRNA(Leu) + L-leucine + ATP = L-leucyl-tRNA(Leu) + AMP + diphosphate</text>
        <dbReference type="Rhea" id="RHEA:11688"/>
        <dbReference type="Rhea" id="RHEA-COMP:9613"/>
        <dbReference type="Rhea" id="RHEA-COMP:9622"/>
        <dbReference type="ChEBI" id="CHEBI:30616"/>
        <dbReference type="ChEBI" id="CHEBI:33019"/>
        <dbReference type="ChEBI" id="CHEBI:57427"/>
        <dbReference type="ChEBI" id="CHEBI:78442"/>
        <dbReference type="ChEBI" id="CHEBI:78494"/>
        <dbReference type="ChEBI" id="CHEBI:456215"/>
        <dbReference type="EC" id="6.1.1.4"/>
    </reaction>
</comment>
<comment type="subcellular location">
    <subcellularLocation>
        <location evidence="1">Cytoplasm</location>
    </subcellularLocation>
</comment>
<comment type="similarity">
    <text evidence="1">Belongs to the class-I aminoacyl-tRNA synthetase family.</text>
</comment>
<gene>
    <name evidence="1" type="primary">leuS</name>
    <name type="ordered locus">BCAH820_4861</name>
</gene>
<protein>
    <recommendedName>
        <fullName evidence="1">Leucine--tRNA ligase</fullName>
        <ecNumber evidence="1">6.1.1.4</ecNumber>
    </recommendedName>
    <alternativeName>
        <fullName evidence="1">Leucyl-tRNA synthetase</fullName>
        <shortName evidence="1">LeuRS</shortName>
    </alternativeName>
</protein>
<organism>
    <name type="scientific">Bacillus cereus (strain AH820)</name>
    <dbReference type="NCBI Taxonomy" id="405535"/>
    <lineage>
        <taxon>Bacteria</taxon>
        <taxon>Bacillati</taxon>
        <taxon>Bacillota</taxon>
        <taxon>Bacilli</taxon>
        <taxon>Bacillales</taxon>
        <taxon>Bacillaceae</taxon>
        <taxon>Bacillus</taxon>
        <taxon>Bacillus cereus group</taxon>
    </lineage>
</organism>
<feature type="chain" id="PRO_1000199177" description="Leucine--tRNA ligase">
    <location>
        <begin position="1"/>
        <end position="802"/>
    </location>
</feature>
<feature type="short sequence motif" description="'HIGH' region">
    <location>
        <begin position="40"/>
        <end position="51"/>
    </location>
</feature>
<feature type="short sequence motif" description="'KMSKS' region">
    <location>
        <begin position="576"/>
        <end position="580"/>
    </location>
</feature>
<feature type="binding site" evidence="1">
    <location>
        <position position="579"/>
    </location>
    <ligand>
        <name>ATP</name>
        <dbReference type="ChEBI" id="CHEBI:30616"/>
    </ligand>
</feature>
<evidence type="ECO:0000255" key="1">
    <source>
        <dbReference type="HAMAP-Rule" id="MF_00049"/>
    </source>
</evidence>
<accession>B7JT07</accession>